<keyword id="KW-0119">Carbohydrate metabolism</keyword>
<keyword id="KW-0136">Cellulose degradation</keyword>
<keyword id="KW-0325">Glycoprotein</keyword>
<keyword id="KW-0326">Glycosidase</keyword>
<keyword id="KW-0378">Hydrolase</keyword>
<keyword id="KW-0624">Polysaccharide degradation</keyword>
<keyword id="KW-0964">Secreted</keyword>
<keyword id="KW-0732">Signal</keyword>
<evidence type="ECO:0000250" key="1"/>
<evidence type="ECO:0000255" key="2"/>
<evidence type="ECO:0000256" key="3">
    <source>
        <dbReference type="SAM" id="MobiDB-lite"/>
    </source>
</evidence>
<evidence type="ECO:0000305" key="4"/>
<feature type="signal peptide" evidence="2">
    <location>
        <begin position="1"/>
        <end position="17"/>
    </location>
</feature>
<feature type="chain" id="PRO_0000393539" description="Probable 1,4-beta-D-glucan cellobiohydrolase A">
    <location>
        <begin position="18"/>
        <end position="452"/>
    </location>
</feature>
<feature type="region of interest" description="Disordered" evidence="3">
    <location>
        <begin position="405"/>
        <end position="431"/>
    </location>
</feature>
<feature type="active site" description="Nucleophile" evidence="1">
    <location>
        <position position="226"/>
    </location>
</feature>
<feature type="active site" description="Proton donor" evidence="1">
    <location>
        <position position="231"/>
    </location>
</feature>
<feature type="glycosylation site" description="N-linked (GlcNAc...) asparagine" evidence="2">
    <location>
        <position position="81"/>
    </location>
</feature>
<feature type="glycosylation site" description="N-linked (GlcNAc...) asparagine" evidence="2">
    <location>
        <position position="284"/>
    </location>
</feature>
<proteinExistence type="inferred from homology"/>
<name>CBHA_ASPFC</name>
<reference key="1">
    <citation type="journal article" date="2008" name="PLoS Genet.">
        <title>Genomic islands in the pathogenic filamentous fungus Aspergillus fumigatus.</title>
        <authorList>
            <person name="Fedorova N.D."/>
            <person name="Khaldi N."/>
            <person name="Joardar V.S."/>
            <person name="Maiti R."/>
            <person name="Amedeo P."/>
            <person name="Anderson M.J."/>
            <person name="Crabtree J."/>
            <person name="Silva J.C."/>
            <person name="Badger J.H."/>
            <person name="Albarraq A."/>
            <person name="Angiuoli S."/>
            <person name="Bussey H."/>
            <person name="Bowyer P."/>
            <person name="Cotty P.J."/>
            <person name="Dyer P.S."/>
            <person name="Egan A."/>
            <person name="Galens K."/>
            <person name="Fraser-Liggett C.M."/>
            <person name="Haas B.J."/>
            <person name="Inman J.M."/>
            <person name="Kent R."/>
            <person name="Lemieux S."/>
            <person name="Malavazi I."/>
            <person name="Orvis J."/>
            <person name="Roemer T."/>
            <person name="Ronning C.M."/>
            <person name="Sundaram J.P."/>
            <person name="Sutton G."/>
            <person name="Turner G."/>
            <person name="Venter J.C."/>
            <person name="White O.R."/>
            <person name="Whitty B.R."/>
            <person name="Youngman P."/>
            <person name="Wolfe K.H."/>
            <person name="Goldman G.H."/>
            <person name="Wortman J.R."/>
            <person name="Jiang B."/>
            <person name="Denning D.W."/>
            <person name="Nierman W.C."/>
        </authorList>
    </citation>
    <scope>NUCLEOTIDE SEQUENCE [LARGE SCALE GENOMIC DNA]</scope>
    <source>
        <strain>CBS 144.89 / FGSC A1163 / CEA10</strain>
    </source>
</reference>
<gene>
    <name type="primary">cbhA</name>
    <name type="synonym">celD</name>
    <name type="ORF">AFUB_073010</name>
</gene>
<sequence>MHQRALLFSALAVAANAQQVGTQTPETHPPLTWQKCTAAGSCSQQSGSVVIDANWRWLHSTKDTTNCYTGNTWNTELCPDNESCAQNCALDGADYAGTYGVTTSGSELKLSFVTGANVGSRLYLMQDDETYQHFNLLNHEFTFDVDVSNLPCGLNGALYFVAMDADGGMSKYPSNKAGAKYGTGYCDSQCPRDLKFINGMANVEGWEPSSSDKNAGVGGHGSCCPEMDIWEANSISTAVTPHPCDDVSQTMCSGDACGGTYSESRYAGTCDPDGCDFNPFRMGNESFYGPGKIVDTKSKMTVVTQFITADGTDSGALSEIKRLYVQNGKVIANSVSNVAGVSGNSITSDFCTAQKKAFGDEDIFAKHGGLSGMGKALSEMVLIMSIWDDHHSSMMWLDSTYPTDADPSKPGVARGTCEHGAGDPENVESQHPDASVTFSNIKFGPIGSTYEG</sequence>
<protein>
    <recommendedName>
        <fullName>Probable 1,4-beta-D-glucan cellobiohydrolase A</fullName>
        <ecNumber>3.2.1.91</ecNumber>
    </recommendedName>
    <alternativeName>
        <fullName>Beta-glucancellobiohydrolase A</fullName>
    </alternativeName>
    <alternativeName>
        <fullName>Cellobiohydrolase D</fullName>
    </alternativeName>
    <alternativeName>
        <fullName>Exocellobiohydrolase A</fullName>
    </alternativeName>
    <alternativeName>
        <fullName>Exoglucanase A</fullName>
    </alternativeName>
</protein>
<dbReference type="EC" id="3.2.1.91"/>
<dbReference type="EMBL" id="DS499599">
    <property type="protein sequence ID" value="EDP49274.1"/>
    <property type="molecule type" value="Genomic_DNA"/>
</dbReference>
<dbReference type="SMR" id="B0Y793"/>
<dbReference type="GlyCosmos" id="B0Y793">
    <property type="glycosylation" value="2 sites, No reported glycans"/>
</dbReference>
<dbReference type="EnsemblFungi" id="EDP49274">
    <property type="protein sequence ID" value="EDP49274"/>
    <property type="gene ID" value="AFUB_073010"/>
</dbReference>
<dbReference type="VEuPathDB" id="FungiDB:AFUB_073010"/>
<dbReference type="HOGENOM" id="CLU_020817_3_2_1"/>
<dbReference type="OrthoDB" id="26549at5052"/>
<dbReference type="PhylomeDB" id="B0Y793"/>
<dbReference type="Proteomes" id="UP000001699">
    <property type="component" value="Unassembled WGS sequence"/>
</dbReference>
<dbReference type="GO" id="GO:0005576">
    <property type="term" value="C:extracellular region"/>
    <property type="evidence" value="ECO:0007669"/>
    <property type="project" value="UniProtKB-SubCell"/>
</dbReference>
<dbReference type="GO" id="GO:0016162">
    <property type="term" value="F:cellulose 1,4-beta-cellobiosidase activity"/>
    <property type="evidence" value="ECO:0007669"/>
    <property type="project" value="UniProtKB-EC"/>
</dbReference>
<dbReference type="GO" id="GO:0030245">
    <property type="term" value="P:cellulose catabolic process"/>
    <property type="evidence" value="ECO:0007669"/>
    <property type="project" value="UniProtKB-KW"/>
</dbReference>
<dbReference type="CDD" id="cd07999">
    <property type="entry name" value="GH7_CBH_EG"/>
    <property type="match status" value="1"/>
</dbReference>
<dbReference type="FunFam" id="2.70.100.10:FF:000001">
    <property type="entry name" value="Glucanase"/>
    <property type="match status" value="1"/>
</dbReference>
<dbReference type="Gene3D" id="2.70.100.10">
    <property type="entry name" value="Glycoside hydrolase, family 7, domain"/>
    <property type="match status" value="1"/>
</dbReference>
<dbReference type="InterPro" id="IPR013320">
    <property type="entry name" value="ConA-like_dom_sf"/>
</dbReference>
<dbReference type="InterPro" id="IPR001722">
    <property type="entry name" value="Glyco_hydro_7"/>
</dbReference>
<dbReference type="InterPro" id="IPR037019">
    <property type="entry name" value="Glyco_hydro_7_sf"/>
</dbReference>
<dbReference type="PANTHER" id="PTHR33753:SF6">
    <property type="entry name" value="1,4-BETA-D-GLUCAN CELLOBIOHYDROLASE A-RELATED"/>
    <property type="match status" value="1"/>
</dbReference>
<dbReference type="PANTHER" id="PTHR33753">
    <property type="entry name" value="1,4-BETA-D-GLUCAN CELLOBIOHYDROLASE B"/>
    <property type="match status" value="1"/>
</dbReference>
<dbReference type="Pfam" id="PF00840">
    <property type="entry name" value="Glyco_hydro_7"/>
    <property type="match status" value="1"/>
</dbReference>
<dbReference type="PRINTS" id="PR00734">
    <property type="entry name" value="GLHYDRLASE7"/>
</dbReference>
<dbReference type="SUPFAM" id="SSF49899">
    <property type="entry name" value="Concanavalin A-like lectins/glucanases"/>
    <property type="match status" value="1"/>
</dbReference>
<accession>B0Y793</accession>
<organism>
    <name type="scientific">Aspergillus fumigatus (strain CBS 144.89 / FGSC A1163 / CEA10)</name>
    <name type="common">Neosartorya fumigata</name>
    <dbReference type="NCBI Taxonomy" id="451804"/>
    <lineage>
        <taxon>Eukaryota</taxon>
        <taxon>Fungi</taxon>
        <taxon>Dikarya</taxon>
        <taxon>Ascomycota</taxon>
        <taxon>Pezizomycotina</taxon>
        <taxon>Eurotiomycetes</taxon>
        <taxon>Eurotiomycetidae</taxon>
        <taxon>Eurotiales</taxon>
        <taxon>Aspergillaceae</taxon>
        <taxon>Aspergillus</taxon>
        <taxon>Aspergillus subgen. Fumigati</taxon>
    </lineage>
</organism>
<comment type="function">
    <text evidence="1">The biological conversion of cellulose to glucose generally requires three types of hydrolytic enzymes: (1) Endoglucanases which cut internal beta-1,4-glucosidic bonds; (2) Exocellobiohydrolases that cut the disaccharide cellobiose from the non-reducing end of the cellulose polymer chain; (3) Beta-1,4-glucosidases which hydrolyze the cellobiose and other short cello-oligosaccharides to glucose.</text>
</comment>
<comment type="catalytic activity">
    <reaction>
        <text>Hydrolysis of (1-&gt;4)-beta-D-glucosidic linkages in cellulose and cellotetraose, releasing cellobiose from the non-reducing ends of the chains.</text>
        <dbReference type="EC" id="3.2.1.91"/>
    </reaction>
</comment>
<comment type="subcellular location">
    <subcellularLocation>
        <location evidence="4">Secreted</location>
    </subcellularLocation>
</comment>
<comment type="similarity">
    <text evidence="4">Belongs to the glycosyl hydrolase 7 (cellulase C) family.</text>
</comment>